<gene>
    <name evidence="1" type="primary">eif2a</name>
    <name type="ordered locus">Smar_0643</name>
</gene>
<accession>A3DM89</accession>
<sequence length="267" mass="31421">MPIPRKELPNVGEYVIATVKEIFDYGAYVTLDEYNGLEAYLPWSEVASRWVRNIRDVIRENQKIVVKVIRVNRRRKTVDVSLKKVPENEKRRKMLWWKRYLKASKIVELVAEKIGKSIEDAYREVVWKLEDYYGDPLLGLEEAVIRGPDALREAGIPEEWIEPLYNEALRHVKVKMVKIRGLMFLRSYESDGVERIKKILLSAKEILDKVGDNVKGRIYLLGSPRYVIEIIAPDYKEAEKVLKEILTTTEKLAKELKVEFRFERERK</sequence>
<proteinExistence type="inferred from homology"/>
<feature type="chain" id="PRO_1000021647" description="Translation initiation factor 2 subunit alpha">
    <location>
        <begin position="1"/>
        <end position="267"/>
    </location>
</feature>
<feature type="domain" description="S1 motif" evidence="1">
    <location>
        <begin position="12"/>
        <end position="83"/>
    </location>
</feature>
<dbReference type="EMBL" id="CP000575">
    <property type="protein sequence ID" value="ABN69749.1"/>
    <property type="molecule type" value="Genomic_DNA"/>
</dbReference>
<dbReference type="RefSeq" id="WP_011838940.1">
    <property type="nucleotide sequence ID" value="NC_009033.1"/>
</dbReference>
<dbReference type="SMR" id="A3DM89"/>
<dbReference type="STRING" id="399550.Smar_0643"/>
<dbReference type="GeneID" id="4906636"/>
<dbReference type="KEGG" id="smr:Smar_0643"/>
<dbReference type="eggNOG" id="arCOG04107">
    <property type="taxonomic scope" value="Archaea"/>
</dbReference>
<dbReference type="HOGENOM" id="CLU_033458_0_2_2"/>
<dbReference type="OrthoDB" id="84794at2157"/>
<dbReference type="Proteomes" id="UP000000254">
    <property type="component" value="Chromosome"/>
</dbReference>
<dbReference type="GO" id="GO:0043022">
    <property type="term" value="F:ribosome binding"/>
    <property type="evidence" value="ECO:0007669"/>
    <property type="project" value="TreeGrafter"/>
</dbReference>
<dbReference type="GO" id="GO:0003723">
    <property type="term" value="F:RNA binding"/>
    <property type="evidence" value="ECO:0007669"/>
    <property type="project" value="UniProtKB-UniRule"/>
</dbReference>
<dbReference type="GO" id="GO:0003743">
    <property type="term" value="F:translation initiation factor activity"/>
    <property type="evidence" value="ECO:0007669"/>
    <property type="project" value="UniProtKB-UniRule"/>
</dbReference>
<dbReference type="CDD" id="cd04452">
    <property type="entry name" value="S1_IF2_alpha"/>
    <property type="match status" value="1"/>
</dbReference>
<dbReference type="FunFam" id="2.40.50.140:FF:000015">
    <property type="entry name" value="Eukaryotic translation initiation factor 2 subunit alpha"/>
    <property type="match status" value="1"/>
</dbReference>
<dbReference type="FunFam" id="3.30.70.1130:FF:000002">
    <property type="entry name" value="Translation initiation factor 2 subunit alpha"/>
    <property type="match status" value="1"/>
</dbReference>
<dbReference type="Gene3D" id="3.30.70.1130">
    <property type="entry name" value="EIF_2_alpha"/>
    <property type="match status" value="1"/>
</dbReference>
<dbReference type="Gene3D" id="2.40.50.140">
    <property type="entry name" value="Nucleic acid-binding proteins"/>
    <property type="match status" value="1"/>
</dbReference>
<dbReference type="Gene3D" id="1.10.150.190">
    <property type="entry name" value="Translation initiation factor 2, subunit 1, domain 2"/>
    <property type="match status" value="1"/>
</dbReference>
<dbReference type="HAMAP" id="MF_00231">
    <property type="entry name" value="eIF_2_alpha"/>
    <property type="match status" value="1"/>
</dbReference>
<dbReference type="InterPro" id="IPR012340">
    <property type="entry name" value="NA-bd_OB-fold"/>
</dbReference>
<dbReference type="InterPro" id="IPR003029">
    <property type="entry name" value="S1_domain"/>
</dbReference>
<dbReference type="InterPro" id="IPR044126">
    <property type="entry name" value="S1_IF2_alpha"/>
</dbReference>
<dbReference type="InterPro" id="IPR022964">
    <property type="entry name" value="TIF2_asu_arc"/>
</dbReference>
<dbReference type="InterPro" id="IPR024055">
    <property type="entry name" value="TIF2_asu_C"/>
</dbReference>
<dbReference type="InterPro" id="IPR024054">
    <property type="entry name" value="TIF2_asu_middle_sf"/>
</dbReference>
<dbReference type="InterPro" id="IPR011488">
    <property type="entry name" value="TIF_2_asu"/>
</dbReference>
<dbReference type="NCBIfam" id="NF003062">
    <property type="entry name" value="PRK03987.1-1"/>
    <property type="match status" value="1"/>
</dbReference>
<dbReference type="NCBIfam" id="NF003064">
    <property type="entry name" value="PRK03987.1-4"/>
    <property type="match status" value="1"/>
</dbReference>
<dbReference type="PANTHER" id="PTHR10602">
    <property type="entry name" value="EUKARYOTIC TRANSLATION INITIATION FACTOR 2 SUBUNIT 1"/>
    <property type="match status" value="1"/>
</dbReference>
<dbReference type="PANTHER" id="PTHR10602:SF0">
    <property type="entry name" value="EUKARYOTIC TRANSLATION INITIATION FACTOR 2 SUBUNIT 1"/>
    <property type="match status" value="1"/>
</dbReference>
<dbReference type="Pfam" id="PF07541">
    <property type="entry name" value="EIF_2_alpha"/>
    <property type="match status" value="1"/>
</dbReference>
<dbReference type="Pfam" id="PF00575">
    <property type="entry name" value="S1"/>
    <property type="match status" value="1"/>
</dbReference>
<dbReference type="SMART" id="SM00316">
    <property type="entry name" value="S1"/>
    <property type="match status" value="1"/>
</dbReference>
<dbReference type="SUPFAM" id="SSF110993">
    <property type="entry name" value="eIF-2-alpha, C-terminal domain"/>
    <property type="match status" value="1"/>
</dbReference>
<dbReference type="SUPFAM" id="SSF116742">
    <property type="entry name" value="eIF2alpha middle domain-like"/>
    <property type="match status" value="1"/>
</dbReference>
<dbReference type="SUPFAM" id="SSF50249">
    <property type="entry name" value="Nucleic acid-binding proteins"/>
    <property type="match status" value="1"/>
</dbReference>
<dbReference type="PROSITE" id="PS50126">
    <property type="entry name" value="S1"/>
    <property type="match status" value="1"/>
</dbReference>
<name>IF2A_STAMF</name>
<keyword id="KW-0396">Initiation factor</keyword>
<keyword id="KW-0648">Protein biosynthesis</keyword>
<keyword id="KW-1185">Reference proteome</keyword>
<keyword id="KW-0694">RNA-binding</keyword>
<organism>
    <name type="scientific">Staphylothermus marinus (strain ATCC 43588 / DSM 3639 / JCM 9404 / F1)</name>
    <dbReference type="NCBI Taxonomy" id="399550"/>
    <lineage>
        <taxon>Archaea</taxon>
        <taxon>Thermoproteota</taxon>
        <taxon>Thermoprotei</taxon>
        <taxon>Desulfurococcales</taxon>
        <taxon>Desulfurococcaceae</taxon>
        <taxon>Staphylothermus</taxon>
    </lineage>
</organism>
<evidence type="ECO:0000255" key="1">
    <source>
        <dbReference type="HAMAP-Rule" id="MF_00231"/>
    </source>
</evidence>
<reference key="1">
    <citation type="journal article" date="2009" name="BMC Genomics">
        <title>The complete genome sequence of Staphylothermus marinus reveals differences in sulfur metabolism among heterotrophic Crenarchaeota.</title>
        <authorList>
            <person name="Anderson I.J."/>
            <person name="Dharmarajan L."/>
            <person name="Rodriguez J."/>
            <person name="Hooper S."/>
            <person name="Porat I."/>
            <person name="Ulrich L.E."/>
            <person name="Elkins J.G."/>
            <person name="Mavromatis K."/>
            <person name="Sun H."/>
            <person name="Land M."/>
            <person name="Lapidus A."/>
            <person name="Lucas S."/>
            <person name="Barry K."/>
            <person name="Huber H."/>
            <person name="Zhulin I.B."/>
            <person name="Whitman W.B."/>
            <person name="Mukhopadhyay B."/>
            <person name="Woese C."/>
            <person name="Bristow J."/>
            <person name="Kyrpides N."/>
        </authorList>
    </citation>
    <scope>NUCLEOTIDE SEQUENCE [LARGE SCALE GENOMIC DNA]</scope>
    <source>
        <strain>ATCC 43588 / DSM 3639 / JCM 9404 / F1</strain>
    </source>
</reference>
<reference key="2">
    <citation type="journal article" date="2009" name="Stand. Genomic Sci.">
        <title>Complete genome sequence of Staphylothermus marinus Stetter and Fiala 1986 type strain F1.</title>
        <authorList>
            <person name="Anderson I.J."/>
            <person name="Sun H."/>
            <person name="Lapidus A."/>
            <person name="Copeland A."/>
            <person name="Glavina Del Rio T."/>
            <person name="Tice H."/>
            <person name="Dalin E."/>
            <person name="Lucas S."/>
            <person name="Barry K."/>
            <person name="Land M."/>
            <person name="Richardson P."/>
            <person name="Huber H."/>
            <person name="Kyrpides N.C."/>
        </authorList>
    </citation>
    <scope>NUCLEOTIDE SEQUENCE [LARGE SCALE GENOMIC DNA]</scope>
    <source>
        <strain>ATCC 43588 / DSM 3639 / JCM 9404 / F1</strain>
    </source>
</reference>
<comment type="function">
    <text evidence="1">eIF-2 functions in the early steps of protein synthesis by forming a ternary complex with GTP and initiator tRNA.</text>
</comment>
<comment type="subunit">
    <text evidence="1">Heterotrimer composed of an alpha, a beta and a gamma chain.</text>
</comment>
<comment type="similarity">
    <text evidence="1">Belongs to the eIF-2-alpha family.</text>
</comment>
<protein>
    <recommendedName>
        <fullName evidence="1">Translation initiation factor 2 subunit alpha</fullName>
    </recommendedName>
    <alternativeName>
        <fullName evidence="1">aIF2-alpha</fullName>
    </alternativeName>
    <alternativeName>
        <fullName evidence="1">eIF-2-alpha</fullName>
    </alternativeName>
</protein>